<keyword id="KW-0961">Cell wall biogenesis/degradation</keyword>
<keyword id="KW-0328">Glycosyltransferase</keyword>
<keyword id="KW-0777">Teichoic acid biosynthesis</keyword>
<keyword id="KW-0808">Transferase</keyword>
<feature type="chain" id="PRO_0000208443" description="N-acetylglucosaminyldiphosphoundecaprenol N-acetyl-beta-D-mannosaminyltransferase">
    <location>
        <begin position="1"/>
        <end position="254"/>
    </location>
</feature>
<accession>Q7A714</accession>
<reference key="1">
    <citation type="journal article" date="2001" name="Lancet">
        <title>Whole genome sequencing of meticillin-resistant Staphylococcus aureus.</title>
        <authorList>
            <person name="Kuroda M."/>
            <person name="Ohta T."/>
            <person name="Uchiyama I."/>
            <person name="Baba T."/>
            <person name="Yuzawa H."/>
            <person name="Kobayashi I."/>
            <person name="Cui L."/>
            <person name="Oguchi A."/>
            <person name="Aoki K."/>
            <person name="Nagai Y."/>
            <person name="Lian J.-Q."/>
            <person name="Ito T."/>
            <person name="Kanamori M."/>
            <person name="Matsumaru H."/>
            <person name="Maruyama A."/>
            <person name="Murakami H."/>
            <person name="Hosoyama A."/>
            <person name="Mizutani-Ui Y."/>
            <person name="Takahashi N.K."/>
            <person name="Sawano T."/>
            <person name="Inoue R."/>
            <person name="Kaito C."/>
            <person name="Sekimizu K."/>
            <person name="Hirakawa H."/>
            <person name="Kuhara S."/>
            <person name="Goto S."/>
            <person name="Yabuzaki J."/>
            <person name="Kanehisa M."/>
            <person name="Yamashita A."/>
            <person name="Oshima K."/>
            <person name="Furuya K."/>
            <person name="Yoshino C."/>
            <person name="Shiba T."/>
            <person name="Hattori M."/>
            <person name="Ogasawara N."/>
            <person name="Hayashi H."/>
            <person name="Hiramatsu K."/>
        </authorList>
    </citation>
    <scope>NUCLEOTIDE SEQUENCE [LARGE SCALE GENOMIC DNA]</scope>
    <source>
        <strain>N315</strain>
    </source>
</reference>
<reference key="2">
    <citation type="submission" date="2007-10" db="UniProtKB">
        <title>Shotgun proteomic analysis of total and membrane protein extracts of S. aureus strain N315.</title>
        <authorList>
            <person name="Vaezzadeh A.R."/>
            <person name="Deshusses J."/>
            <person name="Lescuyer P."/>
            <person name="Hochstrasser D.F."/>
        </authorList>
    </citation>
    <scope>IDENTIFICATION BY MASS SPECTROMETRY [LARGE SCALE ANALYSIS]</scope>
    <source>
        <strain>N315</strain>
    </source>
</reference>
<proteinExistence type="evidence at protein level"/>
<dbReference type="EC" id="2.4.1.187" evidence="1"/>
<dbReference type="EMBL" id="BA000018">
    <property type="protein sequence ID" value="BAB41824.1"/>
    <property type="molecule type" value="Genomic_DNA"/>
</dbReference>
<dbReference type="PIR" id="E89833">
    <property type="entry name" value="E89833"/>
</dbReference>
<dbReference type="RefSeq" id="WP_000215388.1">
    <property type="nucleotide sequence ID" value="NC_002745.2"/>
</dbReference>
<dbReference type="SMR" id="Q7A714"/>
<dbReference type="CAZy" id="GT26">
    <property type="family name" value="Glycosyltransferase Family 26"/>
</dbReference>
<dbReference type="EnsemblBacteria" id="BAB41824">
    <property type="protein sequence ID" value="BAB41824"/>
    <property type="gene ID" value="BAB41824"/>
</dbReference>
<dbReference type="KEGG" id="sau:SA0592"/>
<dbReference type="HOGENOM" id="CLU_063203_3_1_9"/>
<dbReference type="UniPathway" id="UPA00790"/>
<dbReference type="GO" id="GO:0047244">
    <property type="term" value="F:N-acetylglucosaminyldiphosphoundecaprenol N-acetyl-beta-D-mannosaminyltransferase activity"/>
    <property type="evidence" value="ECO:0007669"/>
    <property type="project" value="UniProtKB-UniRule"/>
</dbReference>
<dbReference type="GO" id="GO:0071555">
    <property type="term" value="P:cell wall organization"/>
    <property type="evidence" value="ECO:0007669"/>
    <property type="project" value="UniProtKB-KW"/>
</dbReference>
<dbReference type="GO" id="GO:0019350">
    <property type="term" value="P:teichoic acid biosynthetic process"/>
    <property type="evidence" value="ECO:0007669"/>
    <property type="project" value="UniProtKB-UniRule"/>
</dbReference>
<dbReference type="CDD" id="cd06533">
    <property type="entry name" value="Glyco_transf_WecG_TagA"/>
    <property type="match status" value="1"/>
</dbReference>
<dbReference type="HAMAP" id="MF_02070">
    <property type="entry name" value="TagA_TarA"/>
    <property type="match status" value="1"/>
</dbReference>
<dbReference type="InterPro" id="IPR053391">
    <property type="entry name" value="TAB_Glycosyltransferase"/>
</dbReference>
<dbReference type="InterPro" id="IPR034714">
    <property type="entry name" value="TagA_TarA"/>
</dbReference>
<dbReference type="InterPro" id="IPR004629">
    <property type="entry name" value="WecG_TagA_CpsF"/>
</dbReference>
<dbReference type="NCBIfam" id="NF041710">
    <property type="entry name" value="UDPacetylman_taseTarA"/>
    <property type="match status" value="1"/>
</dbReference>
<dbReference type="NCBIfam" id="TIGR00696">
    <property type="entry name" value="wecG_tagA_cpsF"/>
    <property type="match status" value="1"/>
</dbReference>
<dbReference type="PANTHER" id="PTHR34136">
    <property type="match status" value="1"/>
</dbReference>
<dbReference type="PANTHER" id="PTHR34136:SF1">
    <property type="entry name" value="UDP-N-ACETYL-D-MANNOSAMINURONIC ACID TRANSFERASE"/>
    <property type="match status" value="1"/>
</dbReference>
<dbReference type="Pfam" id="PF03808">
    <property type="entry name" value="Glyco_tran_WecG"/>
    <property type="match status" value="1"/>
</dbReference>
<sequence length="254" mass="29133">MTVEERSNTAKVDILGVDFDNTTMLQMVENIKTFFANQSTNNLFIVTANPEIVNYATTHQAYLELINQASYIVADGTGVVKASHRLKQPLAHRIPGIELMDECLKIAHVNHQKVFLLGATNEVVEAAQYALQQRYPNISFAHHHGYIDLEDETVVKRIKLFKPDYIFVGMGFPKQEEWIMTHENQFESTVMMGVGGSLEVFAGAKKRAPYIFRKLNIEWIYRALIDWKRIGRLKSIPIFMYKIAKAKRKIKKAK</sequence>
<comment type="function">
    <text evidence="1">Catalyzes the conversion of GlcNAc-PP-undecaprenol into ManNAc-GlcNAc-PP-undecaprenol, the first committed lipid intermediate in the de novo synthesis of teichoic acid.</text>
</comment>
<comment type="catalytic activity">
    <reaction evidence="1">
        <text>UDP-N-acetyl-alpha-D-mannosamine + N-acetyl-alpha-D-glucosaminyl-di-trans,octa-cis-undecaprenyl diphosphate = N-acetyl-beta-D-mannosaminyl-(1-&gt;4)-N-acetyl-alpha-D-glucosaminyl di-trans,octa-cis-undecaprenyl diphosphate + UDP + H(+)</text>
        <dbReference type="Rhea" id="RHEA:16053"/>
        <dbReference type="ChEBI" id="CHEBI:15378"/>
        <dbReference type="ChEBI" id="CHEBI:58223"/>
        <dbReference type="ChEBI" id="CHEBI:62959"/>
        <dbReference type="ChEBI" id="CHEBI:68623"/>
        <dbReference type="ChEBI" id="CHEBI:132210"/>
        <dbReference type="EC" id="2.4.1.187"/>
    </reaction>
</comment>
<comment type="pathway">
    <text evidence="2">Cell wall biogenesis; poly(ribitol phosphate) teichoic acid biosynthesis.</text>
</comment>
<comment type="similarity">
    <text evidence="1">Belongs to the glycosyltransferase 26 family. TagA/TarA subfamily.</text>
</comment>
<evidence type="ECO:0000255" key="1">
    <source>
        <dbReference type="HAMAP-Rule" id="MF_02070"/>
    </source>
</evidence>
<evidence type="ECO:0000305" key="2"/>
<protein>
    <recommendedName>
        <fullName evidence="1">N-acetylglucosaminyldiphosphoundecaprenol N-acetyl-beta-D-mannosaminyltransferase</fullName>
        <ecNumber evidence="1">2.4.1.187</ecNumber>
    </recommendedName>
    <alternativeName>
        <fullName evidence="1">N-acetylmannosaminyltransferase</fullName>
    </alternativeName>
    <alternativeName>
        <fullName evidence="1">UDP-N-acetylmannosamine transferase</fullName>
    </alternativeName>
    <alternativeName>
        <fullName evidence="1">UDP-N-acetylmannosamine:N-acetylglucosaminyl pyrophosphorylundecaprenol N-acetylmannosaminyltransferase</fullName>
    </alternativeName>
</protein>
<name>TARA_STAAN</name>
<organism>
    <name type="scientific">Staphylococcus aureus (strain N315)</name>
    <dbReference type="NCBI Taxonomy" id="158879"/>
    <lineage>
        <taxon>Bacteria</taxon>
        <taxon>Bacillati</taxon>
        <taxon>Bacillota</taxon>
        <taxon>Bacilli</taxon>
        <taxon>Bacillales</taxon>
        <taxon>Staphylococcaceae</taxon>
        <taxon>Staphylococcus</taxon>
    </lineage>
</organism>
<gene>
    <name type="primary">tarA</name>
    <name type="ordered locus">SA0592</name>
</gene>